<name>Y2492_SHEFN</name>
<keyword id="KW-1185">Reference proteome</keyword>
<accession>Q080H8</accession>
<evidence type="ECO:0000255" key="1">
    <source>
        <dbReference type="HAMAP-Rule" id="MF_00816"/>
    </source>
</evidence>
<comment type="similarity">
    <text evidence="1">Belongs to the UPF0352 family.</text>
</comment>
<reference key="1">
    <citation type="submission" date="2006-08" db="EMBL/GenBank/DDBJ databases">
        <title>Complete sequence of Shewanella frigidimarina NCIMB 400.</title>
        <authorList>
            <consortium name="US DOE Joint Genome Institute"/>
            <person name="Copeland A."/>
            <person name="Lucas S."/>
            <person name="Lapidus A."/>
            <person name="Barry K."/>
            <person name="Detter J.C."/>
            <person name="Glavina del Rio T."/>
            <person name="Hammon N."/>
            <person name="Israni S."/>
            <person name="Dalin E."/>
            <person name="Tice H."/>
            <person name="Pitluck S."/>
            <person name="Fredrickson J.K."/>
            <person name="Kolker E."/>
            <person name="McCuel L.A."/>
            <person name="DiChristina T."/>
            <person name="Nealson K.H."/>
            <person name="Newman D."/>
            <person name="Tiedje J.M."/>
            <person name="Zhou J."/>
            <person name="Romine M.F."/>
            <person name="Culley D.E."/>
            <person name="Serres M."/>
            <person name="Chertkov O."/>
            <person name="Brettin T."/>
            <person name="Bruce D."/>
            <person name="Han C."/>
            <person name="Tapia R."/>
            <person name="Gilna P."/>
            <person name="Schmutz J."/>
            <person name="Larimer F."/>
            <person name="Land M."/>
            <person name="Hauser L."/>
            <person name="Kyrpides N."/>
            <person name="Mikhailova N."/>
            <person name="Richardson P."/>
        </authorList>
    </citation>
    <scope>NUCLEOTIDE SEQUENCE [LARGE SCALE GENOMIC DNA]</scope>
    <source>
        <strain>NCIMB 400</strain>
    </source>
</reference>
<dbReference type="EMBL" id="CP000447">
    <property type="protein sequence ID" value="ABI72337.1"/>
    <property type="molecule type" value="Genomic_DNA"/>
</dbReference>
<dbReference type="RefSeq" id="WP_011637946.1">
    <property type="nucleotide sequence ID" value="NC_008345.1"/>
</dbReference>
<dbReference type="SMR" id="Q080H8"/>
<dbReference type="STRING" id="318167.Sfri_2492"/>
<dbReference type="KEGG" id="sfr:Sfri_2492"/>
<dbReference type="eggNOG" id="COG3082">
    <property type="taxonomic scope" value="Bacteria"/>
</dbReference>
<dbReference type="HOGENOM" id="CLU_175457_0_0_6"/>
<dbReference type="OrthoDB" id="5771474at2"/>
<dbReference type="Proteomes" id="UP000000684">
    <property type="component" value="Chromosome"/>
</dbReference>
<dbReference type="Gene3D" id="1.10.3390.10">
    <property type="entry name" value="YejL-like"/>
    <property type="match status" value="1"/>
</dbReference>
<dbReference type="HAMAP" id="MF_00816">
    <property type="entry name" value="UPF0352"/>
    <property type="match status" value="1"/>
</dbReference>
<dbReference type="InterPro" id="IPR009857">
    <property type="entry name" value="UPF0352"/>
</dbReference>
<dbReference type="InterPro" id="IPR023202">
    <property type="entry name" value="YejL_sf"/>
</dbReference>
<dbReference type="NCBIfam" id="NF010242">
    <property type="entry name" value="PRK13689.1"/>
    <property type="match status" value="1"/>
</dbReference>
<dbReference type="Pfam" id="PF07208">
    <property type="entry name" value="DUF1414"/>
    <property type="match status" value="1"/>
</dbReference>
<dbReference type="PIRSF" id="PIRSF006188">
    <property type="entry name" value="UCP006188"/>
    <property type="match status" value="1"/>
</dbReference>
<dbReference type="SUPFAM" id="SSF158651">
    <property type="entry name" value="YejL-like"/>
    <property type="match status" value="1"/>
</dbReference>
<sequence>MAIQSKYTNTQVEALISELLAVLAKHQAPTDLSLMVLGNCVTHLLDKKVPGESRQKVAEQFAKALTQSVK</sequence>
<gene>
    <name type="ordered locus">Sfri_2492</name>
</gene>
<feature type="chain" id="PRO_1000062313" description="UPF0352 protein Sfri_2492">
    <location>
        <begin position="1"/>
        <end position="70"/>
    </location>
</feature>
<proteinExistence type="inferred from homology"/>
<protein>
    <recommendedName>
        <fullName evidence="1">UPF0352 protein Sfri_2492</fullName>
    </recommendedName>
</protein>
<organism>
    <name type="scientific">Shewanella frigidimarina (strain NCIMB 400)</name>
    <dbReference type="NCBI Taxonomy" id="318167"/>
    <lineage>
        <taxon>Bacteria</taxon>
        <taxon>Pseudomonadati</taxon>
        <taxon>Pseudomonadota</taxon>
        <taxon>Gammaproteobacteria</taxon>
        <taxon>Alteromonadales</taxon>
        <taxon>Shewanellaceae</taxon>
        <taxon>Shewanella</taxon>
    </lineage>
</organism>